<sequence>MHPFYTRAATMIGEIAAAVSFISKFLRTKGLTSERQLQTFSQSLQELLAEHYKHHWFPEKPCKGSGYRCIRINHKMDPLIGQAAQRIGLSSQELFRLLPSELTLWVDPYEVSYRIGEDGSICVLYEASPAGGSTQNSTNVQMVDSRISCKEELLLGRTSPSKNYNMMTVSG</sequence>
<protein>
    <recommendedName>
        <fullName>Protein BTG1</fullName>
    </recommendedName>
    <alternativeName>
        <fullName>B-cell translocation gene 1 protein</fullName>
    </alternativeName>
</protein>
<dbReference type="EMBL" id="Z16410">
    <property type="protein sequence ID" value="CAA78902.1"/>
    <property type="molecule type" value="Genomic_DNA"/>
</dbReference>
<dbReference type="EMBL" id="L16846">
    <property type="protein sequence ID" value="AAA37327.1"/>
    <property type="molecule type" value="mRNA"/>
</dbReference>
<dbReference type="EMBL" id="BC006834">
    <property type="protein sequence ID" value="AAH06834.1"/>
    <property type="molecule type" value="mRNA"/>
</dbReference>
<dbReference type="EMBL" id="BC018309">
    <property type="protein sequence ID" value="AAH18309.1"/>
    <property type="molecule type" value="mRNA"/>
</dbReference>
<dbReference type="CCDS" id="CCDS24140.1"/>
<dbReference type="PIR" id="I48272">
    <property type="entry name" value="I48272"/>
</dbReference>
<dbReference type="RefSeq" id="NP_031595.1">
    <property type="nucleotide sequence ID" value="NM_007569.2"/>
</dbReference>
<dbReference type="SMR" id="P62325"/>
<dbReference type="BioGRID" id="198397">
    <property type="interactions" value="3"/>
</dbReference>
<dbReference type="FunCoup" id="P62325">
    <property type="interactions" value="2751"/>
</dbReference>
<dbReference type="IntAct" id="P62325">
    <property type="interactions" value="2"/>
</dbReference>
<dbReference type="STRING" id="10090.ENSMUSP00000038863"/>
<dbReference type="iPTMnet" id="P62325"/>
<dbReference type="PhosphoSitePlus" id="P62325"/>
<dbReference type="jPOST" id="P62325"/>
<dbReference type="PaxDb" id="10090-ENSMUSP00000038863"/>
<dbReference type="ProteomicsDB" id="265385"/>
<dbReference type="Pumba" id="P62325"/>
<dbReference type="DNASU" id="12226"/>
<dbReference type="Ensembl" id="ENSMUST00000038377.9">
    <property type="protein sequence ID" value="ENSMUSP00000038863.8"/>
    <property type="gene ID" value="ENSMUSG00000036478.9"/>
</dbReference>
<dbReference type="GeneID" id="12226"/>
<dbReference type="KEGG" id="mmu:12226"/>
<dbReference type="UCSC" id="uc007gww.2">
    <property type="organism name" value="mouse"/>
</dbReference>
<dbReference type="AGR" id="MGI:88215"/>
<dbReference type="CTD" id="694"/>
<dbReference type="MGI" id="MGI:88215">
    <property type="gene designation" value="Btg1"/>
</dbReference>
<dbReference type="VEuPathDB" id="HostDB:ENSMUSG00000036478"/>
<dbReference type="eggNOG" id="KOG4006">
    <property type="taxonomic scope" value="Eukaryota"/>
</dbReference>
<dbReference type="GeneTree" id="ENSGT00950000182952"/>
<dbReference type="HOGENOM" id="CLU_079660_4_0_1"/>
<dbReference type="InParanoid" id="P62325"/>
<dbReference type="OMA" id="SHWFPDK"/>
<dbReference type="OrthoDB" id="19928at2759"/>
<dbReference type="PhylomeDB" id="P62325"/>
<dbReference type="TreeFam" id="TF105272"/>
<dbReference type="BioGRID-ORCS" id="12226">
    <property type="hits" value="2 hits in 79 CRISPR screens"/>
</dbReference>
<dbReference type="ChiTaRS" id="Btg1">
    <property type="organism name" value="mouse"/>
</dbReference>
<dbReference type="PRO" id="PR:P62325"/>
<dbReference type="Proteomes" id="UP000000589">
    <property type="component" value="Chromosome 10"/>
</dbReference>
<dbReference type="RNAct" id="P62325">
    <property type="molecule type" value="protein"/>
</dbReference>
<dbReference type="Bgee" id="ENSMUSG00000036478">
    <property type="expression patterns" value="Expressed in granulocyte and 173 other cell types or tissues"/>
</dbReference>
<dbReference type="ExpressionAtlas" id="P62325">
    <property type="expression patterns" value="baseline and differential"/>
</dbReference>
<dbReference type="GO" id="GO:0005737">
    <property type="term" value="C:cytoplasm"/>
    <property type="evidence" value="ECO:0000250"/>
    <property type="project" value="UniProtKB"/>
</dbReference>
<dbReference type="GO" id="GO:0005634">
    <property type="term" value="C:nucleus"/>
    <property type="evidence" value="ECO:0000250"/>
    <property type="project" value="UniProtKB"/>
</dbReference>
<dbReference type="GO" id="GO:0019899">
    <property type="term" value="F:enzyme binding"/>
    <property type="evidence" value="ECO:0000250"/>
    <property type="project" value="UniProtKB"/>
</dbReference>
<dbReference type="GO" id="GO:0008283">
    <property type="term" value="P:cell population proliferation"/>
    <property type="evidence" value="ECO:0000314"/>
    <property type="project" value="MGI"/>
</dbReference>
<dbReference type="GO" id="GO:0008285">
    <property type="term" value="P:negative regulation of cell population proliferation"/>
    <property type="evidence" value="ECO:0000314"/>
    <property type="project" value="MGI"/>
</dbReference>
<dbReference type="GO" id="GO:0045766">
    <property type="term" value="P:positive regulation of angiogenesis"/>
    <property type="evidence" value="ECO:0000250"/>
    <property type="project" value="UniProtKB"/>
</dbReference>
<dbReference type="GO" id="GO:0043085">
    <property type="term" value="P:positive regulation of catalytic activity"/>
    <property type="evidence" value="ECO:0000303"/>
    <property type="project" value="UniProtKB"/>
</dbReference>
<dbReference type="GO" id="GO:0045603">
    <property type="term" value="P:positive regulation of endothelial cell differentiation"/>
    <property type="evidence" value="ECO:0000250"/>
    <property type="project" value="UniProtKB"/>
</dbReference>
<dbReference type="GO" id="GO:2000271">
    <property type="term" value="P:positive regulation of fibroblast apoptotic process"/>
    <property type="evidence" value="ECO:0000250"/>
    <property type="project" value="UniProtKB"/>
</dbReference>
<dbReference type="GO" id="GO:0045663">
    <property type="term" value="P:positive regulation of myoblast differentiation"/>
    <property type="evidence" value="ECO:0000266"/>
    <property type="project" value="MGI"/>
</dbReference>
<dbReference type="GO" id="GO:0006979">
    <property type="term" value="P:response to oxidative stress"/>
    <property type="evidence" value="ECO:0007669"/>
    <property type="project" value="Ensembl"/>
</dbReference>
<dbReference type="GO" id="GO:0043434">
    <property type="term" value="P:response to peptide hormone"/>
    <property type="evidence" value="ECO:0007669"/>
    <property type="project" value="Ensembl"/>
</dbReference>
<dbReference type="GO" id="GO:0007283">
    <property type="term" value="P:spermatogenesis"/>
    <property type="evidence" value="ECO:0007669"/>
    <property type="project" value="Ensembl"/>
</dbReference>
<dbReference type="FunFam" id="3.90.640.90:FF:000003">
    <property type="entry name" value="BTG1 isoform 1"/>
    <property type="match status" value="1"/>
</dbReference>
<dbReference type="Gene3D" id="3.90.640.90">
    <property type="entry name" value="Anti-proliferative protein, N-terminal domain"/>
    <property type="match status" value="1"/>
</dbReference>
<dbReference type="InterPro" id="IPR002087">
    <property type="entry name" value="Anti_prolifrtn"/>
</dbReference>
<dbReference type="InterPro" id="IPR033332">
    <property type="entry name" value="BTG"/>
</dbReference>
<dbReference type="InterPro" id="IPR036054">
    <property type="entry name" value="BTG-like_sf"/>
</dbReference>
<dbReference type="PANTHER" id="PTHR22978">
    <property type="entry name" value="B-CELL TRANSLOCATION GENE"/>
    <property type="match status" value="1"/>
</dbReference>
<dbReference type="PANTHER" id="PTHR22978:SF30">
    <property type="entry name" value="PROTEIN BTG1"/>
    <property type="match status" value="1"/>
</dbReference>
<dbReference type="Pfam" id="PF07742">
    <property type="entry name" value="BTG"/>
    <property type="match status" value="1"/>
</dbReference>
<dbReference type="PRINTS" id="PR00310">
    <property type="entry name" value="ANTIPRLFBTG1"/>
</dbReference>
<dbReference type="SMART" id="SM00099">
    <property type="entry name" value="btg1"/>
    <property type="match status" value="1"/>
</dbReference>
<dbReference type="SUPFAM" id="SSF160696">
    <property type="entry name" value="BTG domain-like"/>
    <property type="match status" value="1"/>
</dbReference>
<dbReference type="PROSITE" id="PS00960">
    <property type="entry name" value="BTG_1"/>
    <property type="match status" value="1"/>
</dbReference>
<dbReference type="PROSITE" id="PS01203">
    <property type="entry name" value="BTG_2"/>
    <property type="match status" value="1"/>
</dbReference>
<evidence type="ECO:0000250" key="1"/>
<evidence type="ECO:0000250" key="2">
    <source>
        <dbReference type="UniProtKB" id="P62324"/>
    </source>
</evidence>
<evidence type="ECO:0000305" key="3"/>
<feature type="chain" id="PRO_0000143801" description="Protein BTG1">
    <location>
        <begin position="1"/>
        <end position="171"/>
    </location>
</feature>
<feature type="modified residue" description="Phosphoserine" evidence="2">
    <location>
        <position position="159"/>
    </location>
</feature>
<name>BTG1_MOUSE</name>
<comment type="function">
    <text evidence="1">Anti-proliferative protein.</text>
</comment>
<comment type="subunit">
    <text evidence="1">Interacts with CNOT7 and CNOT8.</text>
</comment>
<comment type="similarity">
    <text evidence="3">Belongs to the BTG family.</text>
</comment>
<organism>
    <name type="scientific">Mus musculus</name>
    <name type="common">Mouse</name>
    <dbReference type="NCBI Taxonomy" id="10090"/>
    <lineage>
        <taxon>Eukaryota</taxon>
        <taxon>Metazoa</taxon>
        <taxon>Chordata</taxon>
        <taxon>Craniata</taxon>
        <taxon>Vertebrata</taxon>
        <taxon>Euteleostomi</taxon>
        <taxon>Mammalia</taxon>
        <taxon>Eutheria</taxon>
        <taxon>Euarchontoglires</taxon>
        <taxon>Glires</taxon>
        <taxon>Rodentia</taxon>
        <taxon>Myomorpha</taxon>
        <taxon>Muroidea</taxon>
        <taxon>Muridae</taxon>
        <taxon>Murinae</taxon>
        <taxon>Mus</taxon>
        <taxon>Mus</taxon>
    </lineage>
</organism>
<gene>
    <name type="primary">Btg1</name>
</gene>
<proteinExistence type="evidence at protein level"/>
<keyword id="KW-0597">Phosphoprotein</keyword>
<keyword id="KW-0656">Proto-oncogene</keyword>
<keyword id="KW-1185">Reference proteome</keyword>
<reference key="1">
    <citation type="journal article" date="1993" name="Gene">
        <title>Sequence analysis reveals that the BTG1 anti-proliferative gene is conserved throughout evolution in its coding and 3' non-coding regions.</title>
        <authorList>
            <person name="Rouault J.-P."/>
            <person name="Samarut C."/>
            <person name="Duret L."/>
            <person name="Tessa C."/>
            <person name="Samarut J."/>
            <person name="Magaud J.-P."/>
        </authorList>
    </citation>
    <scope>NUCLEOTIDE SEQUENCE [GENOMIC DNA]</scope>
</reference>
<reference key="2">
    <citation type="submission" date="1993-05" db="EMBL/GenBank/DDBJ databases">
        <authorList>
            <person name="Suk K."/>
            <person name="Erickson K.L."/>
        </authorList>
    </citation>
    <scope>NUCLEOTIDE SEQUENCE [MRNA]</scope>
    <source>
        <strain>C57BL/6J</strain>
    </source>
</reference>
<reference key="3">
    <citation type="journal article" date="2004" name="Genome Res.">
        <title>The status, quality, and expansion of the NIH full-length cDNA project: the Mammalian Gene Collection (MGC).</title>
        <authorList>
            <consortium name="The MGC Project Team"/>
        </authorList>
    </citation>
    <scope>NUCLEOTIDE SEQUENCE [LARGE SCALE MRNA]</scope>
    <source>
        <tissue>Salivary gland</tissue>
    </source>
</reference>
<reference key="4">
    <citation type="journal article" date="2010" name="Cell">
        <title>A tissue-specific atlas of mouse protein phosphorylation and expression.</title>
        <authorList>
            <person name="Huttlin E.L."/>
            <person name="Jedrychowski M.P."/>
            <person name="Elias J.E."/>
            <person name="Goswami T."/>
            <person name="Rad R."/>
            <person name="Beausoleil S.A."/>
            <person name="Villen J."/>
            <person name="Haas W."/>
            <person name="Sowa M.E."/>
            <person name="Gygi S.P."/>
        </authorList>
    </citation>
    <scope>IDENTIFICATION BY MASS SPECTROMETRY [LARGE SCALE ANALYSIS]</scope>
    <source>
        <tissue>Lung</tissue>
    </source>
</reference>
<accession>P62325</accession>
<accession>P31607</accession>